<feature type="chain" id="PRO_1000145671" description="Multidrug resistance protein MdtC">
    <location>
        <begin position="1"/>
        <end position="1025"/>
    </location>
</feature>
<feature type="transmembrane region" description="Helical" evidence="1">
    <location>
        <begin position="3"/>
        <end position="23"/>
    </location>
</feature>
<feature type="transmembrane region" description="Helical" evidence="1">
    <location>
        <begin position="333"/>
        <end position="353"/>
    </location>
</feature>
<feature type="transmembrane region" description="Helical" evidence="1">
    <location>
        <begin position="360"/>
        <end position="380"/>
    </location>
</feature>
<feature type="transmembrane region" description="Helical" evidence="1">
    <location>
        <begin position="387"/>
        <end position="407"/>
    </location>
</feature>
<feature type="transmembrane region" description="Helical" evidence="1">
    <location>
        <begin position="431"/>
        <end position="451"/>
    </location>
</feature>
<feature type="transmembrane region" description="Helical" evidence="1">
    <location>
        <begin position="463"/>
        <end position="483"/>
    </location>
</feature>
<feature type="transmembrane region" description="Helical" evidence="1">
    <location>
        <begin position="528"/>
        <end position="548"/>
    </location>
</feature>
<feature type="transmembrane region" description="Helical" evidence="1">
    <location>
        <begin position="853"/>
        <end position="873"/>
    </location>
</feature>
<feature type="transmembrane region" description="Helical" evidence="1">
    <location>
        <begin position="875"/>
        <end position="895"/>
    </location>
</feature>
<feature type="transmembrane region" description="Helical" evidence="1">
    <location>
        <begin position="897"/>
        <end position="917"/>
    </location>
</feature>
<feature type="transmembrane region" description="Helical" evidence="1">
    <location>
        <begin position="953"/>
        <end position="973"/>
    </location>
</feature>
<feature type="transmembrane region" description="Helical" evidence="1">
    <location>
        <begin position="984"/>
        <end position="1004"/>
    </location>
</feature>
<protein>
    <recommendedName>
        <fullName evidence="1">Multidrug resistance protein MdtC</fullName>
    </recommendedName>
    <alternativeName>
        <fullName evidence="1">Multidrug transporter MdtC</fullName>
    </alternativeName>
</protein>
<sequence length="1025" mass="110965">MKFFALFIYRPVATILLSVAITLCGILGFRMLPVAPLPQVDFPVIMVSASLPGASPETMASSVATPLERSLGRIAGVSEMTSSSSLGSTRIILQFDFDRDINGAARDVQAAINAAQSLLPSGMPSRPTYRKANPSDAPIMILTLTSDTYSQGELYDFASTQLAPTISQIDGVGDVDVGGSSLPAVRVGLNPQALFNQGVSLDDVRTAISNANVRKPQGALEDGTHRWQIQTNDELKTAAEYQPLIIHYNNGGAVRLGDVATVTDSVQDVRNAGMTNAKPAILLMIRKLPEANIIQTVDSIRAKLPELQETIPAAIDLQIAQDRSPTIRASLEEVEQTLIISVALVILVVFLFLRSGRATIIPAVAVPVSLIGTFAAMYLCGFSLNNLSLMALTIATGFVVDDAIVVLENIARHLEAGMKPLQAALQGTREVGFTVLSMSLSLVAVFLPLLLMGGLPGRLLREFAVTLSVAIGISLLVSLTLTPMMCGWMLKASKPREQKRLRGFGRMLVALQQGYGKSLKWGLNHTRLVGVVLLGTIALNIWLYISIPKTFFPEQDTGVLMGGIQADQSISFQAMRGKLQDFMKIIRDDPAVDNVTGFTGGSRVNSGMMFITLKPHDERSETAQQIIDRLRVKLAKEPGANLFLMAVQDIRVGGRQSNASYQYTLLSDDLAALREWEPKIRKKLATLPELADVNSDQQDNGAEMNLVYDRDTMARLGIDVQAANSLLNNAFGQRQISTIYQPMNQYKVVMEVDPRYTQDISALEKMFVINNEGKAIPLSYFAKWQPANAPLSVNHQGLSAASTISFNLPTGKSLSDASAAIDRAMTQLGVPSTVRGSFAGTAQVFQETMNSQVILIIAAIATVYIVLGILYESYVHPLTILSTLPSAGVGALLALELFNAPFSLIALIGIMLLIGIVKKNAIMMVDFALEAQRHGNLTPQEAIFQACLLRFRPIMMTTLAALFGALPLVLSGGDGSELRQPLGITIVGGLVMSQLLTLYTTPVVYLFFDRLRLRFSRKPKQTVTE</sequence>
<organism>
    <name type="scientific">Escherichia coli O17:K52:H18 (strain UMN026 / ExPEC)</name>
    <dbReference type="NCBI Taxonomy" id="585056"/>
    <lineage>
        <taxon>Bacteria</taxon>
        <taxon>Pseudomonadati</taxon>
        <taxon>Pseudomonadota</taxon>
        <taxon>Gammaproteobacteria</taxon>
        <taxon>Enterobacterales</taxon>
        <taxon>Enterobacteriaceae</taxon>
        <taxon>Escherichia</taxon>
    </lineage>
</organism>
<dbReference type="EMBL" id="CU928163">
    <property type="protein sequence ID" value="CAR13602.1"/>
    <property type="molecule type" value="Genomic_DNA"/>
</dbReference>
<dbReference type="RefSeq" id="WP_000667525.1">
    <property type="nucleotide sequence ID" value="NC_011751.1"/>
</dbReference>
<dbReference type="RefSeq" id="YP_002413130.1">
    <property type="nucleotide sequence ID" value="NC_011751.1"/>
</dbReference>
<dbReference type="SMR" id="B7NCB2"/>
<dbReference type="STRING" id="585056.ECUMN_2414"/>
<dbReference type="KEGG" id="eum:ECUMN_2414"/>
<dbReference type="PATRIC" id="fig|585056.7.peg.2595"/>
<dbReference type="HOGENOM" id="CLU_002755_1_2_6"/>
<dbReference type="Proteomes" id="UP000007097">
    <property type="component" value="Chromosome"/>
</dbReference>
<dbReference type="GO" id="GO:0005886">
    <property type="term" value="C:plasma membrane"/>
    <property type="evidence" value="ECO:0007669"/>
    <property type="project" value="UniProtKB-SubCell"/>
</dbReference>
<dbReference type="GO" id="GO:0042910">
    <property type="term" value="F:xenobiotic transmembrane transporter activity"/>
    <property type="evidence" value="ECO:0007669"/>
    <property type="project" value="TreeGrafter"/>
</dbReference>
<dbReference type="FunFam" id="1.20.1640.10:FF:000001">
    <property type="entry name" value="Efflux pump membrane transporter"/>
    <property type="match status" value="1"/>
</dbReference>
<dbReference type="FunFam" id="3.30.70.1430:FF:000001">
    <property type="entry name" value="Efflux pump membrane transporter"/>
    <property type="match status" value="1"/>
</dbReference>
<dbReference type="FunFam" id="3.30.2090.10:FF:000004">
    <property type="entry name" value="Multidrug resistance protein MdtC"/>
    <property type="match status" value="1"/>
</dbReference>
<dbReference type="FunFam" id="3.30.2090.10:FF:000005">
    <property type="entry name" value="Multidrug resistance protein MdtC"/>
    <property type="match status" value="1"/>
</dbReference>
<dbReference type="FunFam" id="3.30.70.1430:FF:000004">
    <property type="entry name" value="Multidrug resistance protein MdtC"/>
    <property type="match status" value="1"/>
</dbReference>
<dbReference type="Gene3D" id="3.30.70.1430">
    <property type="entry name" value="Multidrug efflux transporter AcrB pore domain"/>
    <property type="match status" value="2"/>
</dbReference>
<dbReference type="Gene3D" id="3.30.70.1440">
    <property type="entry name" value="Multidrug efflux transporter AcrB pore domain"/>
    <property type="match status" value="1"/>
</dbReference>
<dbReference type="Gene3D" id="3.30.70.1320">
    <property type="entry name" value="Multidrug efflux transporter AcrB pore domain like"/>
    <property type="match status" value="1"/>
</dbReference>
<dbReference type="Gene3D" id="3.30.2090.10">
    <property type="entry name" value="Multidrug efflux transporter AcrB TolC docking domain, DN and DC subdomains"/>
    <property type="match status" value="2"/>
</dbReference>
<dbReference type="Gene3D" id="1.20.1640.10">
    <property type="entry name" value="Multidrug efflux transporter AcrB transmembrane domain"/>
    <property type="match status" value="2"/>
</dbReference>
<dbReference type="HAMAP" id="MF_01424">
    <property type="entry name" value="MdtC"/>
    <property type="match status" value="1"/>
</dbReference>
<dbReference type="InterPro" id="IPR027463">
    <property type="entry name" value="AcrB_DN_DC_subdom"/>
</dbReference>
<dbReference type="InterPro" id="IPR001036">
    <property type="entry name" value="Acrflvin-R"/>
</dbReference>
<dbReference type="InterPro" id="IPR023931">
    <property type="entry name" value="Multidrug-R_MdtC"/>
</dbReference>
<dbReference type="NCBIfam" id="NF007905">
    <property type="entry name" value="PRK10614.1"/>
    <property type="match status" value="1"/>
</dbReference>
<dbReference type="NCBIfam" id="NF033617">
    <property type="entry name" value="RND_permease_2"/>
    <property type="match status" value="1"/>
</dbReference>
<dbReference type="PANTHER" id="PTHR32063">
    <property type="match status" value="1"/>
</dbReference>
<dbReference type="PANTHER" id="PTHR32063:SF34">
    <property type="entry name" value="MULTIDRUG RESISTANCE PROTEIN MDTC"/>
    <property type="match status" value="1"/>
</dbReference>
<dbReference type="Pfam" id="PF00873">
    <property type="entry name" value="ACR_tran"/>
    <property type="match status" value="1"/>
</dbReference>
<dbReference type="PRINTS" id="PR00702">
    <property type="entry name" value="ACRIFLAVINRP"/>
</dbReference>
<dbReference type="SUPFAM" id="SSF82693">
    <property type="entry name" value="Multidrug efflux transporter AcrB pore domain, PN1, PN2, PC1 and PC2 subdomains"/>
    <property type="match status" value="4"/>
</dbReference>
<dbReference type="SUPFAM" id="SSF82714">
    <property type="entry name" value="Multidrug efflux transporter AcrB TolC docking domain, DN and DC subdomains"/>
    <property type="match status" value="2"/>
</dbReference>
<dbReference type="SUPFAM" id="SSF82866">
    <property type="entry name" value="Multidrug efflux transporter AcrB transmembrane domain"/>
    <property type="match status" value="2"/>
</dbReference>
<proteinExistence type="evidence at transcript level"/>
<keyword id="KW-0997">Cell inner membrane</keyword>
<keyword id="KW-1003">Cell membrane</keyword>
<keyword id="KW-0472">Membrane</keyword>
<keyword id="KW-0812">Transmembrane</keyword>
<keyword id="KW-1133">Transmembrane helix</keyword>
<keyword id="KW-0813">Transport</keyword>
<comment type="function">
    <text evidence="1">The MdtABC tripartite complex confers resistance against novobiocin and deoxycholate.</text>
</comment>
<comment type="subunit">
    <text evidence="1">Part of a tripartite efflux system composed of MdtA, MdtB and MdtC. MdtC forms a heteromultimer with MdtB.</text>
</comment>
<comment type="subcellular location">
    <subcellularLocation>
        <location evidence="1">Cell inner membrane</location>
        <topology evidence="1">Multi-pass membrane protein</topology>
    </subcellularLocation>
</comment>
<comment type="induction">
    <text>The mdtABC operon is transcriptionally activated by BaeR.</text>
</comment>
<comment type="similarity">
    <text evidence="1">Belongs to the resistance-nodulation-cell division (RND) (TC 2.A.6) family. MdtC subfamily.</text>
</comment>
<name>MDTC_ECOLU</name>
<gene>
    <name evidence="1" type="primary">mdtC</name>
    <name type="ordered locus">ECUMN_2414</name>
</gene>
<reference key="1">
    <citation type="journal article" date="2009" name="PLoS Genet.">
        <title>Organised genome dynamics in the Escherichia coli species results in highly diverse adaptive paths.</title>
        <authorList>
            <person name="Touchon M."/>
            <person name="Hoede C."/>
            <person name="Tenaillon O."/>
            <person name="Barbe V."/>
            <person name="Baeriswyl S."/>
            <person name="Bidet P."/>
            <person name="Bingen E."/>
            <person name="Bonacorsi S."/>
            <person name="Bouchier C."/>
            <person name="Bouvet O."/>
            <person name="Calteau A."/>
            <person name="Chiapello H."/>
            <person name="Clermont O."/>
            <person name="Cruveiller S."/>
            <person name="Danchin A."/>
            <person name="Diard M."/>
            <person name="Dossat C."/>
            <person name="Karoui M.E."/>
            <person name="Frapy E."/>
            <person name="Garry L."/>
            <person name="Ghigo J.M."/>
            <person name="Gilles A.M."/>
            <person name="Johnson J."/>
            <person name="Le Bouguenec C."/>
            <person name="Lescat M."/>
            <person name="Mangenot S."/>
            <person name="Martinez-Jehanne V."/>
            <person name="Matic I."/>
            <person name="Nassif X."/>
            <person name="Oztas S."/>
            <person name="Petit M.A."/>
            <person name="Pichon C."/>
            <person name="Rouy Z."/>
            <person name="Ruf C.S."/>
            <person name="Schneider D."/>
            <person name="Tourret J."/>
            <person name="Vacherie B."/>
            <person name="Vallenet D."/>
            <person name="Medigue C."/>
            <person name="Rocha E.P.C."/>
            <person name="Denamur E."/>
        </authorList>
    </citation>
    <scope>NUCLEOTIDE SEQUENCE [LARGE SCALE GENOMIC DNA]</scope>
    <source>
        <strain>UMN026 / ExPEC</strain>
    </source>
</reference>
<evidence type="ECO:0000255" key="1">
    <source>
        <dbReference type="HAMAP-Rule" id="MF_01424"/>
    </source>
</evidence>
<accession>B7NCB2</accession>